<comment type="function">
    <text evidence="1">Transcriptional activator that may play a role in the unfolded protein response. Binds to the UPR element (UPRE) but not to CRE element. Preferentially binds DNA with to the consensus sequence 5'-T[GT]ACGT[GA][GT]-3' and has transcriptional activation activity from UPRE. Binds to NF-kappa-B site and has transcriptional activation activity from NF-kappa-B-containing regulatory elements. Increases the binding of CREM isoform Delta with CRE. The CREM isoform Delta-CREB3L4 heterodimer functions through CRE but not through UPRE and may recruit HIRA to CRE to regulate histone exchange (By similarity).</text>
</comment>
<comment type="subunit">
    <text evidence="1">Binds DNA as a dimer. Forms a heterodimer with CREM isoform Delta (By similarity).</text>
</comment>
<comment type="subcellular location">
    <subcellularLocation>
        <location evidence="1">Endoplasmic reticulum membrane</location>
        <topology evidence="1">Single-pass type II membrane protein</topology>
    </subcellularLocation>
</comment>
<comment type="subcellular location">
    <molecule>Processed cyclic AMP-responsive element-binding protein 3-like protein 4</molecule>
    <subcellularLocation>
        <location evidence="3">Nucleus</location>
    </subcellularLocation>
    <text evidence="1">Under ER stress the cleaved N-terminal cytoplasmic domain translocates into the nucleus.</text>
</comment>
<comment type="alternative products">
    <event type="alternative splicing"/>
    <isoform>
        <id>Q5UEM7-1</id>
        <name>1</name>
        <sequence type="displayed"/>
    </isoform>
    <isoform>
        <id>Q5UEM7-2</id>
        <name>2</name>
        <sequence type="described" ref="VSP_025640"/>
    </isoform>
</comment>
<comment type="PTM">
    <text evidence="1">Controlled by regulated intramembrane proteolysis (RIP). Following ER stress a fragment containing the cytoplasmic transcription factor domain is released by proteolysis. The cleavage seems to be performed sequentially by site-1 and site-2 proteases (PS1 and PS2). PS1 cleavage may be suppressed by a determinant in the C-terminal region (By similarity).</text>
</comment>
<comment type="similarity">
    <text evidence="6">Belongs to the bZIP family. ATF subfamily.</text>
</comment>
<gene>
    <name type="primary">Creb3l4</name>
    <name type="synonym">Aibzip</name>
</gene>
<dbReference type="EMBL" id="AY750875">
    <property type="protein sequence ID" value="AAV29942.1"/>
    <property type="molecule type" value="mRNA"/>
</dbReference>
<dbReference type="EMBL" id="AY750876">
    <property type="protein sequence ID" value="AAV29943.1"/>
    <property type="molecule type" value="mRNA"/>
</dbReference>
<dbReference type="RefSeq" id="NP_001007094.1">
    <molecule id="Q5UEM7-1"/>
    <property type="nucleotide sequence ID" value="NM_001007093.2"/>
</dbReference>
<dbReference type="RefSeq" id="NP_001399484.1">
    <molecule id="Q5UEM7-2"/>
    <property type="nucleotide sequence ID" value="NM_001412555.1"/>
</dbReference>
<dbReference type="RefSeq" id="XP_006232689.1">
    <property type="nucleotide sequence ID" value="XM_006232627.2"/>
</dbReference>
<dbReference type="RefSeq" id="XP_008759369.1">
    <property type="nucleotide sequence ID" value="XM_008761147.1"/>
</dbReference>
<dbReference type="RefSeq" id="XP_017446367.1">
    <property type="nucleotide sequence ID" value="XM_017590878.1"/>
</dbReference>
<dbReference type="RefSeq" id="XP_063137900.1">
    <molecule id="Q5UEM7-1"/>
    <property type="nucleotide sequence ID" value="XM_063281830.1"/>
</dbReference>
<dbReference type="RefSeq" id="XP_063137901.1">
    <molecule id="Q5UEM7-2"/>
    <property type="nucleotide sequence ID" value="XM_063281831.1"/>
</dbReference>
<dbReference type="RefSeq" id="XP_063137902.1">
    <molecule id="Q5UEM7-2"/>
    <property type="nucleotide sequence ID" value="XM_063281832.1"/>
</dbReference>
<dbReference type="SMR" id="Q5UEM7"/>
<dbReference type="FunCoup" id="Q5UEM7">
    <property type="interactions" value="181"/>
</dbReference>
<dbReference type="STRING" id="10116.ENSRNOP00000033353"/>
<dbReference type="GlyCosmos" id="Q5UEM7">
    <property type="glycosylation" value="1 site, No reported glycans"/>
</dbReference>
<dbReference type="GlyGen" id="Q5UEM7">
    <property type="glycosylation" value="1 site"/>
</dbReference>
<dbReference type="iPTMnet" id="Q5UEM7"/>
<dbReference type="PhosphoSitePlus" id="Q5UEM7"/>
<dbReference type="PaxDb" id="10116-ENSRNOP00000033353"/>
<dbReference type="Ensembl" id="ENSRNOT00000032062.5">
    <molecule id="Q5UEM7-2"/>
    <property type="protein sequence ID" value="ENSRNOP00000033353.4"/>
    <property type="gene ID" value="ENSRNOG00000023493.7"/>
</dbReference>
<dbReference type="GeneID" id="310616"/>
<dbReference type="KEGG" id="rno:310616"/>
<dbReference type="UCSC" id="RGD:1359278">
    <molecule id="Q5UEM7-1"/>
    <property type="organism name" value="rat"/>
</dbReference>
<dbReference type="AGR" id="RGD:1359278"/>
<dbReference type="CTD" id="148327"/>
<dbReference type="RGD" id="1359278">
    <property type="gene designation" value="Creb3l4"/>
</dbReference>
<dbReference type="VEuPathDB" id="HostDB:ENSRNOG00000023493"/>
<dbReference type="eggNOG" id="KOG0709">
    <property type="taxonomic scope" value="Eukaryota"/>
</dbReference>
<dbReference type="GeneTree" id="ENSGT00940000160806"/>
<dbReference type="HOGENOM" id="CLU_047257_3_0_1"/>
<dbReference type="InParanoid" id="Q5UEM7"/>
<dbReference type="OMA" id="APTQIYF"/>
<dbReference type="OrthoDB" id="674948at2759"/>
<dbReference type="PhylomeDB" id="Q5UEM7"/>
<dbReference type="PRO" id="PR:Q5UEM7"/>
<dbReference type="Proteomes" id="UP000002494">
    <property type="component" value="Chromosome 2"/>
</dbReference>
<dbReference type="Bgee" id="ENSRNOG00000023493">
    <property type="expression patterns" value="Expressed in colon and 17 other cell types or tissues"/>
</dbReference>
<dbReference type="GO" id="GO:0005783">
    <property type="term" value="C:endoplasmic reticulum"/>
    <property type="evidence" value="ECO:0000266"/>
    <property type="project" value="RGD"/>
</dbReference>
<dbReference type="GO" id="GO:0005789">
    <property type="term" value="C:endoplasmic reticulum membrane"/>
    <property type="evidence" value="ECO:0007669"/>
    <property type="project" value="UniProtKB-SubCell"/>
</dbReference>
<dbReference type="GO" id="GO:0005794">
    <property type="term" value="C:Golgi apparatus"/>
    <property type="evidence" value="ECO:0000266"/>
    <property type="project" value="RGD"/>
</dbReference>
<dbReference type="GO" id="GO:0005739">
    <property type="term" value="C:mitochondrion"/>
    <property type="evidence" value="ECO:0007669"/>
    <property type="project" value="Ensembl"/>
</dbReference>
<dbReference type="GO" id="GO:0031965">
    <property type="term" value="C:nuclear membrane"/>
    <property type="evidence" value="ECO:0007669"/>
    <property type="project" value="Ensembl"/>
</dbReference>
<dbReference type="GO" id="GO:0005654">
    <property type="term" value="C:nucleoplasm"/>
    <property type="evidence" value="ECO:0007669"/>
    <property type="project" value="Ensembl"/>
</dbReference>
<dbReference type="GO" id="GO:0005634">
    <property type="term" value="C:nucleus"/>
    <property type="evidence" value="ECO:0000318"/>
    <property type="project" value="GO_Central"/>
</dbReference>
<dbReference type="GO" id="GO:0003677">
    <property type="term" value="F:DNA binding"/>
    <property type="evidence" value="ECO:0000266"/>
    <property type="project" value="RGD"/>
</dbReference>
<dbReference type="GO" id="GO:0001228">
    <property type="term" value="F:DNA-binding transcription activator activity, RNA polymerase II-specific"/>
    <property type="evidence" value="ECO:0000266"/>
    <property type="project" value="RGD"/>
</dbReference>
<dbReference type="GO" id="GO:0000981">
    <property type="term" value="F:DNA-binding transcription factor activity, RNA polymerase II-specific"/>
    <property type="evidence" value="ECO:0000318"/>
    <property type="project" value="GO_Central"/>
</dbReference>
<dbReference type="GO" id="GO:0000978">
    <property type="term" value="F:RNA polymerase II cis-regulatory region sequence-specific DNA binding"/>
    <property type="evidence" value="ECO:0000318"/>
    <property type="project" value="GO_Central"/>
</dbReference>
<dbReference type="GO" id="GO:0000977">
    <property type="term" value="F:RNA polymerase II transcription regulatory region sequence-specific DNA binding"/>
    <property type="evidence" value="ECO:0000266"/>
    <property type="project" value="RGD"/>
</dbReference>
<dbReference type="GO" id="GO:1990837">
    <property type="term" value="F:sequence-specific double-stranded DNA binding"/>
    <property type="evidence" value="ECO:0000266"/>
    <property type="project" value="RGD"/>
</dbReference>
<dbReference type="GO" id="GO:0045944">
    <property type="term" value="P:positive regulation of transcription by RNA polymerase II"/>
    <property type="evidence" value="ECO:0000266"/>
    <property type="project" value="RGD"/>
</dbReference>
<dbReference type="GO" id="GO:0006357">
    <property type="term" value="P:regulation of transcription by RNA polymerase II"/>
    <property type="evidence" value="ECO:0000318"/>
    <property type="project" value="GO_Central"/>
</dbReference>
<dbReference type="GO" id="GO:0006986">
    <property type="term" value="P:response to unfolded protein"/>
    <property type="evidence" value="ECO:0007669"/>
    <property type="project" value="UniProtKB-KW"/>
</dbReference>
<dbReference type="GO" id="GO:0007283">
    <property type="term" value="P:spermatogenesis"/>
    <property type="evidence" value="ECO:0000266"/>
    <property type="project" value="RGD"/>
</dbReference>
<dbReference type="CDD" id="cd14689">
    <property type="entry name" value="bZIP_CREB3"/>
    <property type="match status" value="1"/>
</dbReference>
<dbReference type="FunFam" id="1.20.5.170:FF:000042">
    <property type="entry name" value="Cyclic AMP-responsive element-binding protein 3-like protein 3"/>
    <property type="match status" value="1"/>
</dbReference>
<dbReference type="Gene3D" id="1.20.5.170">
    <property type="match status" value="1"/>
</dbReference>
<dbReference type="InterPro" id="IPR004827">
    <property type="entry name" value="bZIP"/>
</dbReference>
<dbReference type="InterPro" id="IPR046347">
    <property type="entry name" value="bZIP_sf"/>
</dbReference>
<dbReference type="InterPro" id="IPR051381">
    <property type="entry name" value="CREB_ATF_subfamily"/>
</dbReference>
<dbReference type="PANTHER" id="PTHR45996">
    <property type="entry name" value="AGAP001464-PB"/>
    <property type="match status" value="1"/>
</dbReference>
<dbReference type="PANTHER" id="PTHR45996:SF2">
    <property type="entry name" value="CYCLIC AMP-RESPONSIVE ELEMENT-BINDING PROTEIN 3-LIKE PROTEIN 4"/>
    <property type="match status" value="1"/>
</dbReference>
<dbReference type="Pfam" id="PF00170">
    <property type="entry name" value="bZIP_1"/>
    <property type="match status" value="1"/>
</dbReference>
<dbReference type="SMART" id="SM00338">
    <property type="entry name" value="BRLZ"/>
    <property type="match status" value="1"/>
</dbReference>
<dbReference type="SUPFAM" id="SSF57959">
    <property type="entry name" value="Leucine zipper domain"/>
    <property type="match status" value="1"/>
</dbReference>
<dbReference type="PROSITE" id="PS50217">
    <property type="entry name" value="BZIP"/>
    <property type="match status" value="1"/>
</dbReference>
<proteinExistence type="evidence at transcript level"/>
<reference key="1">
    <citation type="submission" date="2004-09" db="EMBL/GenBank/DDBJ databases">
        <title>Characterization of the transcriptional properties of mammalian AIbZIP proteins.</title>
        <authorList>
            <person name="Savard M.-P."/>
            <person name="Pelletier M."/>
            <person name="Leveille N."/>
            <person name="Grenier J."/>
            <person name="Qi H."/>
            <person name="Labrie C."/>
        </authorList>
    </citation>
    <scope>NUCLEOTIDE SEQUENCE [MRNA] (ISOFORMS 1 AND 2)</scope>
    <source>
        <strain>Sprague-Dawley</strain>
        <tissue>Prostate</tissue>
    </source>
</reference>
<accession>Q5UEM7</accession>
<accession>Q5UEM6</accession>
<protein>
    <recommendedName>
        <fullName>Cyclic AMP-responsive element-binding protein 3-like protein 4</fullName>
        <shortName>cAMP-responsive element-binding protein 3-like protein 4</shortName>
    </recommendedName>
    <alternativeName>
        <fullName>Androgen-induced basic leucine zipper protein</fullName>
        <shortName>AIbZIP</shortName>
    </alternativeName>
    <component>
        <recommendedName>
            <fullName>Processed cyclic AMP-responsive element-binding protein 3-like protein 4</fullName>
        </recommendedName>
    </component>
</protein>
<feature type="chain" id="PRO_0000288082" description="Cyclic AMP-responsive element-binding protein 3-like protein 4">
    <location>
        <begin position="1"/>
        <end position="367"/>
    </location>
</feature>
<feature type="chain" id="PRO_0000296222" description="Processed cyclic AMP-responsive element-binding protein 3-like protein 4">
    <location>
        <begin position="1"/>
        <end status="unknown"/>
    </location>
</feature>
<feature type="topological domain" description="Cytoplasmic" evidence="2">
    <location>
        <begin position="1"/>
        <end position="267"/>
    </location>
</feature>
<feature type="transmembrane region" description="Helical; Signal-anchor for type II membrane protein" evidence="2">
    <location>
        <begin position="268"/>
        <end position="288"/>
    </location>
</feature>
<feature type="topological domain" description="Lumenal" evidence="2">
    <location>
        <begin position="289"/>
        <end position="367"/>
    </location>
</feature>
<feature type="domain" description="bZIP" evidence="3">
    <location>
        <begin position="189"/>
        <end position="252"/>
    </location>
</feature>
<feature type="region of interest" description="Required for transcriptional activation" evidence="1">
    <location>
        <begin position="1"/>
        <end position="52"/>
    </location>
</feature>
<feature type="region of interest" description="Disordered" evidence="4">
    <location>
        <begin position="58"/>
        <end position="81"/>
    </location>
</feature>
<feature type="region of interest" description="Basic motif" evidence="3">
    <location>
        <begin position="191"/>
        <end position="230"/>
    </location>
</feature>
<feature type="region of interest" description="Leucine-zipper" evidence="3">
    <location>
        <begin position="231"/>
        <end position="252"/>
    </location>
</feature>
<feature type="site" description="Cleavage; by PS1" evidence="1">
    <location>
        <begin position="310"/>
        <end position="311"/>
    </location>
</feature>
<feature type="glycosylation site" description="N-linked (GlcNAc...) asparagine" evidence="2">
    <location>
        <position position="338"/>
    </location>
</feature>
<feature type="splice variant" id="VSP_025640" description="In isoform 2." evidence="5">
    <location>
        <begin position="33"/>
        <end position="34"/>
    </location>
</feature>
<sequence>MELGCPELLEPPEDIFSTGSFLELGFNGPPSKVPGLQKSESDDFLNLFIDPNMIRCSETSPGSDSGVSEDPGSPAPQAPSSPALYEVVYEAGALQGTQREAGPTFGLISIQIDQWSPAFMVPGACTVSDLPSEAHRHILPRVSTIAPPPPAALLSCQRLFLTDEEKHLLGQEGVTLPSHLPLTKAEERILKKIRRKIRNKQSAQDSRRRKKEYIDGLESRVAACSEQNQKLQRKVQELERQNISLVAQVHQLQKFTAQTSSRAAQTSTCVLILLFSLALIILPSFSPFQSQPEARSEGYQLHGVISRNILTHEDMTESPESPVLKANLEELPQVPATNGSTKMAHLKMRVKARPTGPIRGMVHADEM</sequence>
<organism>
    <name type="scientific">Rattus norvegicus</name>
    <name type="common">Rat</name>
    <dbReference type="NCBI Taxonomy" id="10116"/>
    <lineage>
        <taxon>Eukaryota</taxon>
        <taxon>Metazoa</taxon>
        <taxon>Chordata</taxon>
        <taxon>Craniata</taxon>
        <taxon>Vertebrata</taxon>
        <taxon>Euteleostomi</taxon>
        <taxon>Mammalia</taxon>
        <taxon>Eutheria</taxon>
        <taxon>Euarchontoglires</taxon>
        <taxon>Glires</taxon>
        <taxon>Rodentia</taxon>
        <taxon>Myomorpha</taxon>
        <taxon>Muroidea</taxon>
        <taxon>Muridae</taxon>
        <taxon>Murinae</taxon>
        <taxon>Rattus</taxon>
    </lineage>
</organism>
<keyword id="KW-0010">Activator</keyword>
<keyword id="KW-0025">Alternative splicing</keyword>
<keyword id="KW-0238">DNA-binding</keyword>
<keyword id="KW-0256">Endoplasmic reticulum</keyword>
<keyword id="KW-0325">Glycoprotein</keyword>
<keyword id="KW-0472">Membrane</keyword>
<keyword id="KW-0539">Nucleus</keyword>
<keyword id="KW-1185">Reference proteome</keyword>
<keyword id="KW-0735">Signal-anchor</keyword>
<keyword id="KW-0804">Transcription</keyword>
<keyword id="KW-0805">Transcription regulation</keyword>
<keyword id="KW-0812">Transmembrane</keyword>
<keyword id="KW-1133">Transmembrane helix</keyword>
<keyword id="KW-0834">Unfolded protein response</keyword>
<name>CR3L4_RAT</name>
<evidence type="ECO:0000250" key="1"/>
<evidence type="ECO:0000255" key="2"/>
<evidence type="ECO:0000255" key="3">
    <source>
        <dbReference type="PROSITE-ProRule" id="PRU00978"/>
    </source>
</evidence>
<evidence type="ECO:0000256" key="4">
    <source>
        <dbReference type="SAM" id="MobiDB-lite"/>
    </source>
</evidence>
<evidence type="ECO:0000303" key="5">
    <source ref="1"/>
</evidence>
<evidence type="ECO:0000305" key="6"/>